<evidence type="ECO:0000269" key="1">
    <source>
    </source>
</evidence>
<evidence type="ECO:0000269" key="2">
    <source>
    </source>
</evidence>
<evidence type="ECO:0000269" key="3">
    <source>
    </source>
</evidence>
<evidence type="ECO:0000269" key="4">
    <source>
    </source>
</evidence>
<evidence type="ECO:0000305" key="5"/>
<evidence type="ECO:0007829" key="6">
    <source>
        <dbReference type="PDB" id="1I4V"/>
    </source>
</evidence>
<evidence type="ECO:0007829" key="7">
    <source>
        <dbReference type="PDB" id="1UMU"/>
    </source>
</evidence>
<evidence type="ECO:0007829" key="8">
    <source>
        <dbReference type="PDB" id="8GMT"/>
    </source>
</evidence>
<reference key="1">
    <citation type="journal article" date="1985" name="Proc. Natl. Acad. Sci. U.S.A.">
        <title>Structural analysis of the umu operon required for inducible mutagenesis in Escherichia coli.</title>
        <authorList>
            <person name="Kitagawa Y."/>
            <person name="Akaboshi E."/>
            <person name="Shinagawa H."/>
            <person name="Horii T."/>
            <person name="Ogawa H."/>
            <person name="Kato T."/>
        </authorList>
    </citation>
    <scope>NUCLEOTIDE SEQUENCE [GENOMIC DNA]</scope>
</reference>
<reference key="2">
    <citation type="journal article" date="1985" name="Proc. Natl. Acad. Sci. U.S.A.">
        <title>umuDC and mucAB operons whose products are required for UV light- and chemical-induced mutagenesis: UmuD, MucA, and LexA proteins share homology.</title>
        <authorList>
            <person name="Perry K.L."/>
            <person name="Elledge S.J."/>
            <person name="Mitchell B.B."/>
            <person name="Marsh L."/>
            <person name="Walker G.C."/>
        </authorList>
    </citation>
    <scope>NUCLEOTIDE SEQUENCE [GENOMIC DNA]</scope>
</reference>
<reference key="3">
    <citation type="journal article" date="1996" name="DNA Res.">
        <title>A 718-kb DNA sequence of the Escherichia coli K-12 genome corresponding to the 12.7-28.0 min region on the linkage map.</title>
        <authorList>
            <person name="Oshima T."/>
            <person name="Aiba H."/>
            <person name="Baba T."/>
            <person name="Fujita K."/>
            <person name="Hayashi K."/>
            <person name="Honjo A."/>
            <person name="Ikemoto K."/>
            <person name="Inada T."/>
            <person name="Itoh T."/>
            <person name="Kajihara M."/>
            <person name="Kanai K."/>
            <person name="Kashimoto K."/>
            <person name="Kimura S."/>
            <person name="Kitagawa M."/>
            <person name="Makino K."/>
            <person name="Masuda S."/>
            <person name="Miki T."/>
            <person name="Mizobuchi K."/>
            <person name="Mori H."/>
            <person name="Motomura K."/>
            <person name="Nakamura Y."/>
            <person name="Nashimoto H."/>
            <person name="Nishio Y."/>
            <person name="Saito N."/>
            <person name="Sampei G."/>
            <person name="Seki Y."/>
            <person name="Tagami H."/>
            <person name="Takemoto K."/>
            <person name="Wada C."/>
            <person name="Yamamoto Y."/>
            <person name="Yano M."/>
            <person name="Horiuchi T."/>
        </authorList>
    </citation>
    <scope>NUCLEOTIDE SEQUENCE [LARGE SCALE GENOMIC DNA]</scope>
    <source>
        <strain>K12 / W3110 / ATCC 27325 / DSM 5911</strain>
    </source>
</reference>
<reference key="4">
    <citation type="journal article" date="1997" name="Science">
        <title>The complete genome sequence of Escherichia coli K-12.</title>
        <authorList>
            <person name="Blattner F.R."/>
            <person name="Plunkett G. III"/>
            <person name="Bloch C.A."/>
            <person name="Perna N.T."/>
            <person name="Burland V."/>
            <person name="Riley M."/>
            <person name="Collado-Vides J."/>
            <person name="Glasner J.D."/>
            <person name="Rode C.K."/>
            <person name="Mayhew G.F."/>
            <person name="Gregor J."/>
            <person name="Davis N.W."/>
            <person name="Kirkpatrick H.A."/>
            <person name="Goeden M.A."/>
            <person name="Rose D.J."/>
            <person name="Mau B."/>
            <person name="Shao Y."/>
        </authorList>
    </citation>
    <scope>NUCLEOTIDE SEQUENCE [LARGE SCALE GENOMIC DNA]</scope>
    <source>
        <strain>K12 / MG1655 / ATCC 47076</strain>
    </source>
</reference>
<reference key="5">
    <citation type="journal article" date="2006" name="Mol. Syst. Biol.">
        <title>Highly accurate genome sequences of Escherichia coli K-12 strains MG1655 and W3110.</title>
        <authorList>
            <person name="Hayashi K."/>
            <person name="Morooka N."/>
            <person name="Yamamoto Y."/>
            <person name="Fujita K."/>
            <person name="Isono K."/>
            <person name="Choi S."/>
            <person name="Ohtsubo E."/>
            <person name="Baba T."/>
            <person name="Wanner B.L."/>
            <person name="Mori H."/>
            <person name="Horiuchi T."/>
        </authorList>
    </citation>
    <scope>NUCLEOTIDE SEQUENCE [LARGE SCALE GENOMIC DNA]</scope>
    <source>
        <strain>K12 / W3110 / ATCC 27325 / DSM 5911</strain>
    </source>
</reference>
<reference key="6">
    <citation type="journal article" date="1992" name="Mol. Gen. Genet.">
        <title>Escherichia coli umuDC mutants: DNA sequence alterations and UmuD cleavage.</title>
        <authorList>
            <person name="Koch W.H."/>
            <person name="Ennis D.G."/>
            <person name="Levine A.S."/>
            <person name="Woodgate R."/>
        </authorList>
    </citation>
    <scope>MUTAGENESIS</scope>
</reference>
<reference key="7">
    <citation type="journal article" date="1997" name="Electrophoresis">
        <title>Escherichia coli proteome analysis using the gene-protein database.</title>
        <authorList>
            <person name="VanBogelen R.A."/>
            <person name="Abshire K.Z."/>
            <person name="Moldover B."/>
            <person name="Olson E.R."/>
            <person name="Neidhardt F.C."/>
        </authorList>
    </citation>
    <scope>IDENTIFICATION BY 2D-GEL</scope>
</reference>
<reference key="8">
    <citation type="journal article" date="2000" name="Mol. Microbiol.">
        <title>Identification of additional genes belonging to the LexA regulon in Escherichia coli.</title>
        <authorList>
            <person name="Fernandez De Henestrosa A.R."/>
            <person name="Ogi T."/>
            <person name="Aoyagi S."/>
            <person name="Chafin D."/>
            <person name="Hayes J.J."/>
            <person name="Ohmori H."/>
            <person name="Woodgate R."/>
        </authorList>
    </citation>
    <scope>REGULATION BY LEXA</scope>
    <scope>INDUCTION</scope>
    <source>
        <strain>K12 / RW118</strain>
    </source>
</reference>
<reference key="9">
    <citation type="journal article" date="2000" name="Nature">
        <title>Roles of E. coli DNA polymerases IV and V in lesion-targeted and untargeted SOS mutagenesis.</title>
        <authorList>
            <person name="Tang M."/>
            <person name="Pham P."/>
            <person name="Shen X."/>
            <person name="Taylor J.S."/>
            <person name="O'Donnell M."/>
            <person name="Woodgate R."/>
            <person name="Goodman M.F."/>
        </authorList>
    </citation>
    <scope>FUNCTION IN TRANSLATION REPAIR</scope>
    <scope>STIMULATION BY RECA AND BETA SLIDING-CLAMP COMPLEX</scope>
</reference>
<reference key="10">
    <citation type="journal article" date="2009" name="Mol. Cell">
        <title>Hydroxyurea induces hydroxyl radical-mediated cell death in Escherichia coli.</title>
        <authorList>
            <person name="Davies B.W."/>
            <person name="Kohanski M.A."/>
            <person name="Simmons L.A."/>
            <person name="Winkler J.A."/>
            <person name="Collins J.J."/>
            <person name="Walker G.C."/>
        </authorList>
    </citation>
    <scope>INDUCTION BY HYDROXYUREA</scope>
    <source>
        <strain>K12 / MC4100 / ATCC 35695 / DSM 6574</strain>
    </source>
</reference>
<reference key="11">
    <citation type="journal article" date="1996" name="Nature">
        <title>Structure of the UmuD' protein and its regulation in response to DNA damage.</title>
        <authorList>
            <person name="Peat T.S."/>
            <person name="Frank E."/>
            <person name="McDonald J.P."/>
            <person name="Levine A.S."/>
            <person name="Woodgate R."/>
            <person name="Hendrickson W.A."/>
        </authorList>
    </citation>
    <scope>X-RAY CRYSTALLOGRAPHY (2.5 ANGSTROMS) OF UMUD'</scope>
</reference>
<gene>
    <name type="primary">umuD</name>
    <name type="ordered locus">b1183</name>
    <name type="ordered locus">JW1172</name>
</gene>
<feature type="chain" id="PRO_0000041988" description="Protein UmuD">
    <location>
        <begin position="1"/>
        <end position="139"/>
    </location>
</feature>
<feature type="chain" id="PRO_0000027305" description="Protein UmuD'">
    <location>
        <begin position="25"/>
        <end position="139"/>
    </location>
</feature>
<feature type="active site" description="For autocatalytic cleavage activity">
    <location>
        <position position="60"/>
    </location>
</feature>
<feature type="active site" description="For autocatalytic cleavage activity">
    <location>
        <position position="97"/>
    </location>
</feature>
<feature type="site" description="Cleavage; by autolysis">
    <location>
        <begin position="24"/>
        <end position="25"/>
    </location>
</feature>
<feature type="mutagenesis site" description="In umuD1; non-cleavable." evidence="3">
    <original>P</original>
    <variation>D</variation>
    <location>
        <position position="27"/>
    </location>
</feature>
<feature type="mutagenesis site" description="In umuD44; non-cleavable." evidence="3">
    <original>G</original>
    <variation>R</variation>
    <location>
        <position position="65"/>
    </location>
</feature>
<feature type="mutagenesis site" description="In umuD77; non-cleavable." evidence="3">
    <original>G</original>
    <variation>D</variation>
    <location>
        <position position="92"/>
    </location>
</feature>
<feature type="strand" evidence="8">
    <location>
        <begin position="15"/>
        <end position="20"/>
    </location>
</feature>
<feature type="strand" evidence="8">
    <location>
        <begin position="22"/>
        <end position="26"/>
    </location>
</feature>
<feature type="strand" evidence="8">
    <location>
        <begin position="35"/>
        <end position="38"/>
    </location>
</feature>
<feature type="helix" evidence="7">
    <location>
        <begin position="40"/>
        <end position="44"/>
    </location>
</feature>
<feature type="helix" evidence="7">
    <location>
        <begin position="48"/>
        <end position="50"/>
    </location>
</feature>
<feature type="strand" evidence="7">
    <location>
        <begin position="51"/>
        <end position="55"/>
    </location>
</feature>
<feature type="strand" evidence="6">
    <location>
        <begin position="58"/>
        <end position="60"/>
    </location>
</feature>
<feature type="helix" evidence="7">
    <location>
        <begin position="62"/>
        <end position="64"/>
    </location>
</feature>
<feature type="strand" evidence="7">
    <location>
        <begin position="71"/>
        <end position="75"/>
    </location>
</feature>
<feature type="strand" evidence="6">
    <location>
        <begin position="82"/>
        <end position="84"/>
    </location>
</feature>
<feature type="strand" evidence="7">
    <location>
        <begin position="85"/>
        <end position="90"/>
    </location>
</feature>
<feature type="strand" evidence="7">
    <location>
        <begin position="93"/>
        <end position="100"/>
    </location>
</feature>
<feature type="strand" evidence="7">
    <location>
        <begin position="102"/>
        <end position="104"/>
    </location>
</feature>
<feature type="strand" evidence="7">
    <location>
        <begin position="106"/>
        <end position="108"/>
    </location>
</feature>
<feature type="strand" evidence="8">
    <location>
        <begin position="112"/>
        <end position="114"/>
    </location>
</feature>
<feature type="strand" evidence="6">
    <location>
        <begin position="120"/>
        <end position="124"/>
    </location>
</feature>
<feature type="strand" evidence="7">
    <location>
        <begin position="125"/>
        <end position="135"/>
    </location>
</feature>
<sequence>MLFIKPADLREIVTFPLFSDLVQCGFPSPAADYVEQRIDLNQLLIQHPSATYFVKASGDSMIDGGISDGDLLIVDSAITASHGDIVIAAVDGEFTVKKLQLRPTVQLIPMNSAYSPITISSEDTLDVFGVVIHVVKAMR</sequence>
<protein>
    <recommendedName>
        <fullName>Protein UmuD</fullName>
        <ecNumber>3.4.21.-</ecNumber>
    </recommendedName>
    <alternativeName>
        <fullName>DNA polymerase V</fullName>
        <shortName>Pol V</shortName>
    </alternativeName>
    <component>
        <recommendedName>
            <fullName>Protein UmuD'</fullName>
        </recommendedName>
    </component>
</protein>
<name>UMUD_ECOLI</name>
<organism>
    <name type="scientific">Escherichia coli (strain K12)</name>
    <dbReference type="NCBI Taxonomy" id="83333"/>
    <lineage>
        <taxon>Bacteria</taxon>
        <taxon>Pseudomonadati</taxon>
        <taxon>Pseudomonadota</taxon>
        <taxon>Gammaproteobacteria</taxon>
        <taxon>Enterobacterales</taxon>
        <taxon>Enterobacteriaceae</taxon>
        <taxon>Escherichia</taxon>
    </lineage>
</organism>
<accession>P0AG11</accession>
<accession>P04153</accession>
<dbReference type="EC" id="3.4.21.-"/>
<dbReference type="EMBL" id="M10107">
    <property type="protein sequence ID" value="AAA24728.1"/>
    <property type="molecule type" value="Genomic_DNA"/>
</dbReference>
<dbReference type="EMBL" id="M13387">
    <property type="protein sequence ID" value="AAA98073.1"/>
    <property type="molecule type" value="Genomic_DNA"/>
</dbReference>
<dbReference type="EMBL" id="U00096">
    <property type="protein sequence ID" value="AAC74267.1"/>
    <property type="molecule type" value="Genomic_DNA"/>
</dbReference>
<dbReference type="EMBL" id="AP009048">
    <property type="protein sequence ID" value="BAA36030.1"/>
    <property type="molecule type" value="Genomic_DNA"/>
</dbReference>
<dbReference type="PIR" id="A03551">
    <property type="entry name" value="ZWECD"/>
</dbReference>
<dbReference type="RefSeq" id="NP_415701.1">
    <property type="nucleotide sequence ID" value="NC_000913.3"/>
</dbReference>
<dbReference type="RefSeq" id="WP_000897378.1">
    <property type="nucleotide sequence ID" value="NZ_STEB01000023.1"/>
</dbReference>
<dbReference type="PDB" id="1AY9">
    <property type="method" value="X-ray"/>
    <property type="resolution" value="3.00 A"/>
    <property type="chains" value="A/B=32-139"/>
</dbReference>
<dbReference type="PDB" id="1I4V">
    <property type="method" value="NMR"/>
    <property type="chains" value="A/B=26-139"/>
</dbReference>
<dbReference type="PDB" id="1UMU">
    <property type="method" value="X-ray"/>
    <property type="resolution" value="2.50 A"/>
    <property type="chains" value="A/B=25-137"/>
</dbReference>
<dbReference type="PDB" id="8GMT">
    <property type="method" value="EM"/>
    <property type="resolution" value="3.31 A"/>
    <property type="chains" value="A/B=1-139"/>
</dbReference>
<dbReference type="PDBsum" id="1AY9"/>
<dbReference type="PDBsum" id="1I4V"/>
<dbReference type="PDBsum" id="1UMU"/>
<dbReference type="PDBsum" id="8GMT"/>
<dbReference type="BMRB" id="P0AG11"/>
<dbReference type="SMR" id="P0AG11"/>
<dbReference type="BioGRID" id="4261817">
    <property type="interactions" value="124"/>
</dbReference>
<dbReference type="BioGRID" id="850113">
    <property type="interactions" value="7"/>
</dbReference>
<dbReference type="ComplexPortal" id="CPX-5544">
    <property type="entry name" value="DNA polymerase V mutasome complex"/>
</dbReference>
<dbReference type="DIP" id="DIP-29679N"/>
<dbReference type="FunCoup" id="P0AG11">
    <property type="interactions" value="179"/>
</dbReference>
<dbReference type="IntAct" id="P0AG11">
    <property type="interactions" value="15"/>
</dbReference>
<dbReference type="STRING" id="511145.b1183"/>
<dbReference type="MEROPS" id="S24.003"/>
<dbReference type="PaxDb" id="511145-b1183"/>
<dbReference type="EnsemblBacteria" id="AAC74267">
    <property type="protein sequence ID" value="AAC74267"/>
    <property type="gene ID" value="b1183"/>
</dbReference>
<dbReference type="GeneID" id="945746"/>
<dbReference type="KEGG" id="ecj:JW1172"/>
<dbReference type="KEGG" id="eco:b1183"/>
<dbReference type="KEGG" id="ecoc:C3026_06970"/>
<dbReference type="PATRIC" id="fig|1411691.4.peg.1104"/>
<dbReference type="EchoBASE" id="EB1050"/>
<dbReference type="eggNOG" id="COG1974">
    <property type="taxonomic scope" value="Bacteria"/>
</dbReference>
<dbReference type="HOGENOM" id="CLU_066192_0_0_6"/>
<dbReference type="InParanoid" id="P0AG11"/>
<dbReference type="OMA" id="VQIWGVA"/>
<dbReference type="OrthoDB" id="9787787at2"/>
<dbReference type="PhylomeDB" id="P0AG11"/>
<dbReference type="BioCyc" id="EcoCyc:EG11057-MONOMER"/>
<dbReference type="BioCyc" id="MetaCyc:EG11057-MONOMER"/>
<dbReference type="BRENDA" id="3.4.21.B30">
    <property type="organism ID" value="2026"/>
</dbReference>
<dbReference type="EvolutionaryTrace" id="P0AG11"/>
<dbReference type="PRO" id="PR:P0AG11"/>
<dbReference type="Proteomes" id="UP000000625">
    <property type="component" value="Chromosome"/>
</dbReference>
<dbReference type="GO" id="GO:0005829">
    <property type="term" value="C:cytosol"/>
    <property type="evidence" value="ECO:0000305"/>
    <property type="project" value="EcoCyc"/>
</dbReference>
<dbReference type="GO" id="GO:0009355">
    <property type="term" value="C:DNA polymerase V complex"/>
    <property type="evidence" value="ECO:0000314"/>
    <property type="project" value="EcoCyc"/>
</dbReference>
<dbReference type="GO" id="GO:0032993">
    <property type="term" value="C:protein-DNA complex"/>
    <property type="evidence" value="ECO:0000318"/>
    <property type="project" value="GO_Central"/>
</dbReference>
<dbReference type="GO" id="GO:0008094">
    <property type="term" value="F:ATP-dependent activity, acting on DNA"/>
    <property type="evidence" value="ECO:0000314"/>
    <property type="project" value="EcoCyc"/>
</dbReference>
<dbReference type="GO" id="GO:0001217">
    <property type="term" value="F:DNA-binding transcription repressor activity"/>
    <property type="evidence" value="ECO:0000318"/>
    <property type="project" value="GO_Central"/>
</dbReference>
<dbReference type="GO" id="GO:0003887">
    <property type="term" value="F:DNA-directed DNA polymerase activity"/>
    <property type="evidence" value="ECO:0000314"/>
    <property type="project" value="EcoCyc"/>
</dbReference>
<dbReference type="GO" id="GO:0042802">
    <property type="term" value="F:identical protein binding"/>
    <property type="evidence" value="ECO:0000353"/>
    <property type="project" value="IntAct"/>
</dbReference>
<dbReference type="GO" id="GO:0003676">
    <property type="term" value="F:nucleic acid binding"/>
    <property type="evidence" value="ECO:0000269"/>
    <property type="project" value="DisProt"/>
</dbReference>
<dbReference type="GO" id="GO:0043565">
    <property type="term" value="F:sequence-specific DNA binding"/>
    <property type="evidence" value="ECO:0000318"/>
    <property type="project" value="GO_Central"/>
</dbReference>
<dbReference type="GO" id="GO:0008236">
    <property type="term" value="F:serine-type peptidase activity"/>
    <property type="evidence" value="ECO:0007669"/>
    <property type="project" value="UniProtKB-KW"/>
</dbReference>
<dbReference type="GO" id="GO:0003697">
    <property type="term" value="F:single-stranded DNA binding"/>
    <property type="evidence" value="ECO:0000314"/>
    <property type="project" value="EcoCyc"/>
</dbReference>
<dbReference type="GO" id="GO:0006974">
    <property type="term" value="P:DNA damage response"/>
    <property type="evidence" value="ECO:0000270"/>
    <property type="project" value="EcoCyc"/>
</dbReference>
<dbReference type="GO" id="GO:0006281">
    <property type="term" value="P:DNA repair"/>
    <property type="evidence" value="ECO:0000315"/>
    <property type="project" value="EcoCyc"/>
</dbReference>
<dbReference type="GO" id="GO:0045892">
    <property type="term" value="P:negative regulation of DNA-templated transcription"/>
    <property type="evidence" value="ECO:0000318"/>
    <property type="project" value="GO_Central"/>
</dbReference>
<dbReference type="GO" id="GO:0006508">
    <property type="term" value="P:proteolysis"/>
    <property type="evidence" value="ECO:0007669"/>
    <property type="project" value="UniProtKB-KW"/>
</dbReference>
<dbReference type="GO" id="GO:0009432">
    <property type="term" value="P:SOS response"/>
    <property type="evidence" value="ECO:0000270"/>
    <property type="project" value="EcoCyc"/>
</dbReference>
<dbReference type="GO" id="GO:0019985">
    <property type="term" value="P:translesion synthesis"/>
    <property type="evidence" value="ECO:0000314"/>
    <property type="project" value="EcoCyc"/>
</dbReference>
<dbReference type="CDD" id="cd06529">
    <property type="entry name" value="S24_LexA-like"/>
    <property type="match status" value="1"/>
</dbReference>
<dbReference type="DisProt" id="DP00626"/>
<dbReference type="Gene3D" id="2.10.109.10">
    <property type="entry name" value="Umud Fragment, subunit A"/>
    <property type="match status" value="1"/>
</dbReference>
<dbReference type="InterPro" id="IPR039418">
    <property type="entry name" value="LexA-like"/>
</dbReference>
<dbReference type="InterPro" id="IPR036286">
    <property type="entry name" value="LexA/Signal_pep-like_sf"/>
</dbReference>
<dbReference type="InterPro" id="IPR050077">
    <property type="entry name" value="LexA_repressor"/>
</dbReference>
<dbReference type="InterPro" id="IPR006197">
    <property type="entry name" value="Peptidase_S24_LexA"/>
</dbReference>
<dbReference type="InterPro" id="IPR015927">
    <property type="entry name" value="Peptidase_S24_S26A/B/C"/>
</dbReference>
<dbReference type="NCBIfam" id="NF007621">
    <property type="entry name" value="PRK10276.1"/>
    <property type="match status" value="1"/>
</dbReference>
<dbReference type="PANTHER" id="PTHR33516">
    <property type="entry name" value="LEXA REPRESSOR"/>
    <property type="match status" value="1"/>
</dbReference>
<dbReference type="PANTHER" id="PTHR33516:SF2">
    <property type="entry name" value="LEXA REPRESSOR-RELATED"/>
    <property type="match status" value="1"/>
</dbReference>
<dbReference type="Pfam" id="PF00717">
    <property type="entry name" value="Peptidase_S24"/>
    <property type="match status" value="1"/>
</dbReference>
<dbReference type="PRINTS" id="PR00726">
    <property type="entry name" value="LEXASERPTASE"/>
</dbReference>
<dbReference type="SUPFAM" id="SSF51306">
    <property type="entry name" value="LexA/Signal peptidase"/>
    <property type="match status" value="1"/>
</dbReference>
<keyword id="KW-0002">3D-structure</keyword>
<keyword id="KW-0068">Autocatalytic cleavage</keyword>
<keyword id="KW-0227">DNA damage</keyword>
<keyword id="KW-0234">DNA repair</keyword>
<keyword id="KW-0378">Hydrolase</keyword>
<keyword id="KW-0645">Protease</keyword>
<keyword id="KW-1185">Reference proteome</keyword>
<keyword id="KW-0720">Serine protease</keyword>
<keyword id="KW-0741">SOS mutagenesis</keyword>
<keyword id="KW-0742">SOS response</keyword>
<proteinExistence type="evidence at protein level"/>
<comment type="function">
    <text evidence="2">Involved in UV protection and mutation. Poorly processive, error-prone DNA polymerase involved in translesion repair (PubMed:10801133). Essential for induced (or SOS) mutagenesis. Able to replicate DNA across DNA lesions (thymine photodimers and abasic sites, called translesion synthesis) in the presence of activated RecA; efficiency is maximal in the presence of the beta sliding-clamp and clamp-loading complex of DNA polymerase III plus single-stranded binding protein (SSB) (PubMed:10801133). RecA and to a lesser extent the beta clamp-complex may target Pol V to replication complexes stalled at DNA template lesions (PubMed:10801133).</text>
</comment>
<comment type="interaction">
    <interactant intactId="EBI-1122622">
        <id>P0AG11</id>
    </interactant>
    <interactant intactId="EBI-1122622">
        <id>P0AG11</id>
        <label>umuD</label>
    </interactant>
    <organismsDiffer>false</organismsDiffer>
    <experiments>6</experiments>
</comment>
<comment type="interaction">
    <interactant intactId="EBI-25426537">
        <id>PRO_0000027305</id>
    </interactant>
    <interactant intactId="EBI-1119849">
        <id>P04152</id>
        <label>umuC</label>
    </interactant>
    <organismsDiffer>false</organismsDiffer>
    <experiments>7</experiments>
</comment>
<comment type="induction">
    <text evidence="1 4">Repressed by LexA, induced by DNA damage (PubMed:10760155). Induced 1.5-fold by hydroxyurea (PubMed:20005847).</text>
</comment>
<comment type="similarity">
    <text evidence="5">Belongs to the peptidase S24 family.</text>
</comment>